<protein>
    <recommendedName>
        <fullName evidence="8">Cyclin-dependent kinase-like 3</fullName>
        <ecNumber>2.7.11.22</ecNumber>
    </recommendedName>
</protein>
<feature type="chain" id="PRO_0000085822" description="Cyclin-dependent kinase-like 3">
    <location>
        <begin position="1"/>
        <end position="595"/>
    </location>
</feature>
<feature type="domain" description="Protein kinase" evidence="3">
    <location>
        <begin position="4"/>
        <end position="286"/>
    </location>
</feature>
<feature type="region of interest" description="Disordered" evidence="5">
    <location>
        <begin position="362"/>
        <end position="427"/>
    </location>
</feature>
<feature type="region of interest" description="Disordered" evidence="5">
    <location>
        <begin position="448"/>
        <end position="513"/>
    </location>
</feature>
<feature type="region of interest" description="Disordered" evidence="5">
    <location>
        <begin position="551"/>
        <end position="586"/>
    </location>
</feature>
<feature type="short sequence motif" description="[NKR]KIAxRE">
    <location>
        <begin position="45"/>
        <end position="51"/>
    </location>
</feature>
<feature type="compositionally biased region" description="Basic and acidic residues" evidence="5">
    <location>
        <begin position="368"/>
        <end position="386"/>
    </location>
</feature>
<feature type="compositionally biased region" description="Polar residues" evidence="5">
    <location>
        <begin position="387"/>
        <end position="397"/>
    </location>
</feature>
<feature type="compositionally biased region" description="Low complexity" evidence="5">
    <location>
        <begin position="448"/>
        <end position="457"/>
    </location>
</feature>
<feature type="compositionally biased region" description="Polar residues" evidence="5">
    <location>
        <begin position="468"/>
        <end position="491"/>
    </location>
</feature>
<feature type="compositionally biased region" description="Polar residues" evidence="5">
    <location>
        <begin position="499"/>
        <end position="509"/>
    </location>
</feature>
<feature type="compositionally biased region" description="Basic and acidic residues" evidence="5">
    <location>
        <begin position="570"/>
        <end position="585"/>
    </location>
</feature>
<feature type="active site" description="Proton acceptor" evidence="3 4">
    <location>
        <position position="125"/>
    </location>
</feature>
<feature type="binding site" evidence="3">
    <location>
        <begin position="10"/>
        <end position="18"/>
    </location>
    <ligand>
        <name>ATP</name>
        <dbReference type="ChEBI" id="CHEBI:30616"/>
    </ligand>
</feature>
<feature type="binding site" evidence="3">
    <location>
        <position position="33"/>
    </location>
    <ligand>
        <name>ATP</name>
        <dbReference type="ChEBI" id="CHEBI:30616"/>
    </ligand>
</feature>
<feature type="modified residue" description="Phosphothreonine" evidence="2">
    <location>
        <position position="158"/>
    </location>
</feature>
<feature type="modified residue" description="Phosphotyrosine" evidence="2">
    <location>
        <position position="160"/>
    </location>
</feature>
<feature type="splice variant" id="VSP_016149" description="In isoform 5." evidence="7">
    <original>MEMYETLGKVGEGSYGT</original>
    <variation>MKPLEKWEREVMEP</variation>
    <location>
        <begin position="1"/>
        <end position="17"/>
    </location>
</feature>
<feature type="splice variant" id="VSP_016150" description="In isoform 4." evidence="6">
    <original>FIPELRAKLLQEAKVNSFIKPKENFKENEPVRDEKKSVFTNTLLYGNPSLYGKEVDRDK</original>
    <variation>KWTETKGPRSSKSESLRPKGAKEMSQTRRSQSMKATTASRAQLMTHSPHHWTRSLLSWN</variation>
    <location>
        <begin position="295"/>
        <end position="353"/>
    </location>
</feature>
<feature type="splice variant" id="VSP_016151" description="In isoform 4." evidence="6">
    <location>
        <begin position="354"/>
        <end position="595"/>
    </location>
</feature>
<feature type="splice variant" id="VSP_016152" description="In isoform 6." evidence="7">
    <location>
        <begin position="458"/>
        <end position="595"/>
    </location>
</feature>
<feature type="splice variant" id="VSP_030154" description="In isoform 7." evidence="7">
    <original>GGDGDCEGKNLKRNRFFFSR</original>
    <variation>QPVKQVNSNQ</variation>
    <location>
        <begin position="576"/>
        <end position="595"/>
    </location>
</feature>
<feature type="splice variant" id="VSP_016154" description="In isoform 2." evidence="7">
    <original>GGDGDCEGKN</original>
    <variation>QSARHLPGQC</variation>
    <location>
        <begin position="576"/>
        <end position="585"/>
    </location>
</feature>
<feature type="splice variant" id="VSP_016155" description="In isoform 3 and isoform 5." evidence="7">
    <original>GGDGDC</original>
    <variation>SLTMYL</variation>
    <location>
        <begin position="576"/>
        <end position="581"/>
    </location>
</feature>
<feature type="splice variant" id="VSP_016156" description="In isoform 3 and isoform 5." evidence="7">
    <location>
        <begin position="582"/>
        <end position="595"/>
    </location>
</feature>
<feature type="splice variant" id="VSP_016157" description="In isoform 2." evidence="7">
    <location>
        <begin position="586"/>
        <end position="595"/>
    </location>
</feature>
<feature type="sequence conflict" description="In Ref. 1; BAC32701." evidence="8" ref="1">
    <original>E</original>
    <variation>Q</variation>
    <location>
        <position position="12"/>
    </location>
</feature>
<feature type="sequence conflict" description="In Ref. 1; BAC37400." evidence="8" ref="1">
    <original>H</original>
    <variation>Y</variation>
    <location>
        <position position="23"/>
    </location>
</feature>
<feature type="sequence conflict" description="In Ref. 1; BAC32324." evidence="8" ref="1">
    <original>P</original>
    <variation>H</variation>
    <location>
        <position position="153"/>
    </location>
</feature>
<feature type="sequence conflict" description="In Ref. 1; BAC37400." evidence="8" ref="1">
    <original>D</original>
    <variation>E</variation>
    <location>
        <position position="352"/>
    </location>
</feature>
<reference key="1">
    <citation type="journal article" date="2005" name="Science">
        <title>The transcriptional landscape of the mammalian genome.</title>
        <authorList>
            <person name="Carninci P."/>
            <person name="Kasukawa T."/>
            <person name="Katayama S."/>
            <person name="Gough J."/>
            <person name="Frith M.C."/>
            <person name="Maeda N."/>
            <person name="Oyama R."/>
            <person name="Ravasi T."/>
            <person name="Lenhard B."/>
            <person name="Wells C."/>
            <person name="Kodzius R."/>
            <person name="Shimokawa K."/>
            <person name="Bajic V.B."/>
            <person name="Brenner S.E."/>
            <person name="Batalov S."/>
            <person name="Forrest A.R."/>
            <person name="Zavolan M."/>
            <person name="Davis M.J."/>
            <person name="Wilming L.G."/>
            <person name="Aidinis V."/>
            <person name="Allen J.E."/>
            <person name="Ambesi-Impiombato A."/>
            <person name="Apweiler R."/>
            <person name="Aturaliya R.N."/>
            <person name="Bailey T.L."/>
            <person name="Bansal M."/>
            <person name="Baxter L."/>
            <person name="Beisel K.W."/>
            <person name="Bersano T."/>
            <person name="Bono H."/>
            <person name="Chalk A.M."/>
            <person name="Chiu K.P."/>
            <person name="Choudhary V."/>
            <person name="Christoffels A."/>
            <person name="Clutterbuck D.R."/>
            <person name="Crowe M.L."/>
            <person name="Dalla E."/>
            <person name="Dalrymple B.P."/>
            <person name="de Bono B."/>
            <person name="Della Gatta G."/>
            <person name="di Bernardo D."/>
            <person name="Down T."/>
            <person name="Engstrom P."/>
            <person name="Fagiolini M."/>
            <person name="Faulkner G."/>
            <person name="Fletcher C.F."/>
            <person name="Fukushima T."/>
            <person name="Furuno M."/>
            <person name="Futaki S."/>
            <person name="Gariboldi M."/>
            <person name="Georgii-Hemming P."/>
            <person name="Gingeras T.R."/>
            <person name="Gojobori T."/>
            <person name="Green R.E."/>
            <person name="Gustincich S."/>
            <person name="Harbers M."/>
            <person name="Hayashi Y."/>
            <person name="Hensch T.K."/>
            <person name="Hirokawa N."/>
            <person name="Hill D."/>
            <person name="Huminiecki L."/>
            <person name="Iacono M."/>
            <person name="Ikeo K."/>
            <person name="Iwama A."/>
            <person name="Ishikawa T."/>
            <person name="Jakt M."/>
            <person name="Kanapin A."/>
            <person name="Katoh M."/>
            <person name="Kawasawa Y."/>
            <person name="Kelso J."/>
            <person name="Kitamura H."/>
            <person name="Kitano H."/>
            <person name="Kollias G."/>
            <person name="Krishnan S.P."/>
            <person name="Kruger A."/>
            <person name="Kummerfeld S.K."/>
            <person name="Kurochkin I.V."/>
            <person name="Lareau L.F."/>
            <person name="Lazarevic D."/>
            <person name="Lipovich L."/>
            <person name="Liu J."/>
            <person name="Liuni S."/>
            <person name="McWilliam S."/>
            <person name="Madan Babu M."/>
            <person name="Madera M."/>
            <person name="Marchionni L."/>
            <person name="Matsuda H."/>
            <person name="Matsuzawa S."/>
            <person name="Miki H."/>
            <person name="Mignone F."/>
            <person name="Miyake S."/>
            <person name="Morris K."/>
            <person name="Mottagui-Tabar S."/>
            <person name="Mulder N."/>
            <person name="Nakano N."/>
            <person name="Nakauchi H."/>
            <person name="Ng P."/>
            <person name="Nilsson R."/>
            <person name="Nishiguchi S."/>
            <person name="Nishikawa S."/>
            <person name="Nori F."/>
            <person name="Ohara O."/>
            <person name="Okazaki Y."/>
            <person name="Orlando V."/>
            <person name="Pang K.C."/>
            <person name="Pavan W.J."/>
            <person name="Pavesi G."/>
            <person name="Pesole G."/>
            <person name="Petrovsky N."/>
            <person name="Piazza S."/>
            <person name="Reed J."/>
            <person name="Reid J.F."/>
            <person name="Ring B.Z."/>
            <person name="Ringwald M."/>
            <person name="Rost B."/>
            <person name="Ruan Y."/>
            <person name="Salzberg S.L."/>
            <person name="Sandelin A."/>
            <person name="Schneider C."/>
            <person name="Schoenbach C."/>
            <person name="Sekiguchi K."/>
            <person name="Semple C.A."/>
            <person name="Seno S."/>
            <person name="Sessa L."/>
            <person name="Sheng Y."/>
            <person name="Shibata Y."/>
            <person name="Shimada H."/>
            <person name="Shimada K."/>
            <person name="Silva D."/>
            <person name="Sinclair B."/>
            <person name="Sperling S."/>
            <person name="Stupka E."/>
            <person name="Sugiura K."/>
            <person name="Sultana R."/>
            <person name="Takenaka Y."/>
            <person name="Taki K."/>
            <person name="Tammoja K."/>
            <person name="Tan S.L."/>
            <person name="Tang S."/>
            <person name="Taylor M.S."/>
            <person name="Tegner J."/>
            <person name="Teichmann S.A."/>
            <person name="Ueda H.R."/>
            <person name="van Nimwegen E."/>
            <person name="Verardo R."/>
            <person name="Wei C.L."/>
            <person name="Yagi K."/>
            <person name="Yamanishi H."/>
            <person name="Zabarovsky E."/>
            <person name="Zhu S."/>
            <person name="Zimmer A."/>
            <person name="Hide W."/>
            <person name="Bult C."/>
            <person name="Grimmond S.M."/>
            <person name="Teasdale R.D."/>
            <person name="Liu E.T."/>
            <person name="Brusic V."/>
            <person name="Quackenbush J."/>
            <person name="Wahlestedt C."/>
            <person name="Mattick J.S."/>
            <person name="Hume D.A."/>
            <person name="Kai C."/>
            <person name="Sasaki D."/>
            <person name="Tomaru Y."/>
            <person name="Fukuda S."/>
            <person name="Kanamori-Katayama M."/>
            <person name="Suzuki M."/>
            <person name="Aoki J."/>
            <person name="Arakawa T."/>
            <person name="Iida J."/>
            <person name="Imamura K."/>
            <person name="Itoh M."/>
            <person name="Kato T."/>
            <person name="Kawaji H."/>
            <person name="Kawagashira N."/>
            <person name="Kawashima T."/>
            <person name="Kojima M."/>
            <person name="Kondo S."/>
            <person name="Konno H."/>
            <person name="Nakano K."/>
            <person name="Ninomiya N."/>
            <person name="Nishio T."/>
            <person name="Okada M."/>
            <person name="Plessy C."/>
            <person name="Shibata K."/>
            <person name="Shiraki T."/>
            <person name="Suzuki S."/>
            <person name="Tagami M."/>
            <person name="Waki K."/>
            <person name="Watahiki A."/>
            <person name="Okamura-Oho Y."/>
            <person name="Suzuki H."/>
            <person name="Kawai J."/>
            <person name="Hayashizaki Y."/>
        </authorList>
    </citation>
    <scope>NUCLEOTIDE SEQUENCE [LARGE SCALE MRNA] (ISOFORMS 1; 2; 5 AND 6)</scope>
    <scope>NUCLEOTIDE SEQUENCE [LARGE SCALE MRNA] OF 368-595 (ISOFORM 7)</scope>
    <source>
        <strain>C57BL/6J</strain>
        <tissue>Brain cortex</tissue>
        <tissue>Corpora quadrigemina</tissue>
        <tissue>Embryo</tissue>
        <tissue>Embryonic lung</tissue>
    </source>
</reference>
<reference key="2">
    <citation type="journal article" date="2009" name="PLoS Biol.">
        <title>Lineage-specific biology revealed by a finished genome assembly of the mouse.</title>
        <authorList>
            <person name="Church D.M."/>
            <person name="Goodstadt L."/>
            <person name="Hillier L.W."/>
            <person name="Zody M.C."/>
            <person name="Goldstein S."/>
            <person name="She X."/>
            <person name="Bult C.J."/>
            <person name="Agarwala R."/>
            <person name="Cherry J.L."/>
            <person name="DiCuccio M."/>
            <person name="Hlavina W."/>
            <person name="Kapustin Y."/>
            <person name="Meric P."/>
            <person name="Maglott D."/>
            <person name="Birtle Z."/>
            <person name="Marques A.C."/>
            <person name="Graves T."/>
            <person name="Zhou S."/>
            <person name="Teague B."/>
            <person name="Potamousis K."/>
            <person name="Churas C."/>
            <person name="Place M."/>
            <person name="Herschleb J."/>
            <person name="Runnheim R."/>
            <person name="Forrest D."/>
            <person name="Amos-Landgraf J."/>
            <person name="Schwartz D.C."/>
            <person name="Cheng Z."/>
            <person name="Lindblad-Toh K."/>
            <person name="Eichler E.E."/>
            <person name="Ponting C.P."/>
        </authorList>
    </citation>
    <scope>NUCLEOTIDE SEQUENCE [LARGE SCALE GENOMIC DNA]</scope>
    <source>
        <strain>C57BL/6J</strain>
    </source>
</reference>
<reference key="3">
    <citation type="journal article" date="2004" name="Genome Res.">
        <title>The status, quality, and expansion of the NIH full-length cDNA project: the Mammalian Gene Collection (MGC).</title>
        <authorList>
            <consortium name="The MGC Project Team"/>
        </authorList>
    </citation>
    <scope>NUCLEOTIDE SEQUENCE [LARGE SCALE MRNA] (ISOFORM 4)</scope>
    <source>
        <strain>FVB/N</strain>
        <tissue>Kidney</tissue>
    </source>
</reference>
<dbReference type="EC" id="2.7.11.22"/>
<dbReference type="EMBL" id="AK043995">
    <property type="protein sequence ID" value="BAC31729.2"/>
    <property type="molecule type" value="mRNA"/>
</dbReference>
<dbReference type="EMBL" id="AK045356">
    <property type="protein sequence ID" value="BAC32324.1"/>
    <property type="molecule type" value="mRNA"/>
</dbReference>
<dbReference type="EMBL" id="AK046394">
    <property type="protein sequence ID" value="BAC32701.1"/>
    <property type="molecule type" value="mRNA"/>
</dbReference>
<dbReference type="EMBL" id="AK050990">
    <property type="protein sequence ID" value="BAC34488.1"/>
    <property type="molecule type" value="mRNA"/>
</dbReference>
<dbReference type="EMBL" id="AK078804">
    <property type="protein sequence ID" value="BAC37400.1"/>
    <property type="molecule type" value="mRNA"/>
</dbReference>
<dbReference type="EMBL" id="AL669920">
    <property type="status" value="NOT_ANNOTATED_CDS"/>
    <property type="molecule type" value="Genomic_DNA"/>
</dbReference>
<dbReference type="EMBL" id="BC028871">
    <property type="protein sequence ID" value="AAH28871.1"/>
    <property type="molecule type" value="mRNA"/>
</dbReference>
<dbReference type="CCDS" id="CCDS24665.1">
    <molecule id="Q8BLF2-1"/>
</dbReference>
<dbReference type="CCDS" id="CCDS48788.1">
    <molecule id="Q8BLF2-7"/>
</dbReference>
<dbReference type="CCDS" id="CCDS48790.1">
    <molecule id="Q8BLF2-2"/>
</dbReference>
<dbReference type="CCDS" id="CCDS48791.1">
    <molecule id="Q8BLF2-6"/>
</dbReference>
<dbReference type="CCDS" id="CCDS48792.1">
    <molecule id="Q8BLF2-4"/>
</dbReference>
<dbReference type="RefSeq" id="NP_001160125.1">
    <property type="nucleotide sequence ID" value="NM_001166653.1"/>
</dbReference>
<dbReference type="RefSeq" id="NP_001160126.1">
    <molecule id="Q8BLF2-2"/>
    <property type="nucleotide sequence ID" value="NM_001166654.1"/>
</dbReference>
<dbReference type="RefSeq" id="NP_001160127.1">
    <molecule id="Q8BLF2-6"/>
    <property type="nucleotide sequence ID" value="NM_001166655.1"/>
</dbReference>
<dbReference type="RefSeq" id="NP_001160128.1">
    <molecule id="Q8BLF2-7"/>
    <property type="nucleotide sequence ID" value="NM_001166656.1"/>
</dbReference>
<dbReference type="RefSeq" id="NP_001160129.1">
    <molecule id="Q8BLF2-4"/>
    <property type="nucleotide sequence ID" value="NM_001166657.1"/>
</dbReference>
<dbReference type="RefSeq" id="NP_001350405.1">
    <molecule id="Q8BLF2-6"/>
    <property type="nucleotide sequence ID" value="NM_001363476.1"/>
</dbReference>
<dbReference type="RefSeq" id="NP_722480.3">
    <molecule id="Q8BLF2-1"/>
    <property type="nucleotide sequence ID" value="NM_153785.4"/>
</dbReference>
<dbReference type="RefSeq" id="XP_011247178.1">
    <property type="nucleotide sequence ID" value="XM_011248876.1"/>
</dbReference>
<dbReference type="RefSeq" id="XP_011247179.1">
    <property type="nucleotide sequence ID" value="XM_011248877.2"/>
</dbReference>
<dbReference type="RefSeq" id="XP_011247180.1">
    <molecule id="Q8BLF2-2"/>
    <property type="nucleotide sequence ID" value="XM_011248878.1"/>
</dbReference>
<dbReference type="RefSeq" id="XP_011247181.1">
    <property type="nucleotide sequence ID" value="XM_011248879.1"/>
</dbReference>
<dbReference type="RefSeq" id="XP_011247182.1">
    <property type="nucleotide sequence ID" value="XM_011248880.2"/>
</dbReference>
<dbReference type="RefSeq" id="XP_017169911.1">
    <property type="nucleotide sequence ID" value="XM_017314422.1"/>
</dbReference>
<dbReference type="RefSeq" id="XP_030101620.1">
    <molecule id="Q8BLF2-2"/>
    <property type="nucleotide sequence ID" value="XM_030245760.1"/>
</dbReference>
<dbReference type="RefSeq" id="XP_030101623.1">
    <molecule id="Q8BLF2-1"/>
    <property type="nucleotide sequence ID" value="XM_030245763.2"/>
</dbReference>
<dbReference type="RefSeq" id="XP_030101624.1">
    <molecule id="Q8BLF2-2"/>
    <property type="nucleotide sequence ID" value="XM_030245764.2"/>
</dbReference>
<dbReference type="RefSeq" id="XP_036012394.1">
    <molecule id="Q8BLF2-2"/>
    <property type="nucleotide sequence ID" value="XM_036156501.1"/>
</dbReference>
<dbReference type="RefSeq" id="XP_036012396.1">
    <molecule id="Q8BLF2-1"/>
    <property type="nucleotide sequence ID" value="XM_036156503.1"/>
</dbReference>
<dbReference type="RefSeq" id="XP_036012397.1">
    <molecule id="Q8BLF2-2"/>
    <property type="nucleotide sequence ID" value="XM_036156504.1"/>
</dbReference>
<dbReference type="SMR" id="Q8BLF2"/>
<dbReference type="BioGRID" id="229399">
    <property type="interactions" value="1"/>
</dbReference>
<dbReference type="FunCoup" id="Q8BLF2">
    <property type="interactions" value="2192"/>
</dbReference>
<dbReference type="STRING" id="10090.ENSMUSP00000113303"/>
<dbReference type="iPTMnet" id="Q8BLF2"/>
<dbReference type="PhosphoSitePlus" id="Q8BLF2"/>
<dbReference type="SwissPalm" id="Q8BLF2"/>
<dbReference type="PaxDb" id="10090-ENSMUSP00000064315"/>
<dbReference type="ProteomicsDB" id="281562">
    <molecule id="Q8BLF2-1"/>
</dbReference>
<dbReference type="ProteomicsDB" id="281563">
    <molecule id="Q8BLF2-2"/>
</dbReference>
<dbReference type="ProteomicsDB" id="281564">
    <molecule id="Q8BLF2-7"/>
</dbReference>
<dbReference type="ProteomicsDB" id="281565">
    <molecule id="Q8BLF2-4"/>
</dbReference>
<dbReference type="ProteomicsDB" id="281566">
    <molecule id="Q8BLF2-5"/>
</dbReference>
<dbReference type="ProteomicsDB" id="281567">
    <molecule id="Q8BLF2-6"/>
</dbReference>
<dbReference type="ProteomicsDB" id="281568">
    <molecule id="Q8BLF2-8"/>
</dbReference>
<dbReference type="Antibodypedia" id="2061">
    <property type="antibodies" value="203 antibodies from 29 providers"/>
</dbReference>
<dbReference type="DNASU" id="213084"/>
<dbReference type="Ensembl" id="ENSMUST00000063303.11">
    <molecule id="Q8BLF2-1"/>
    <property type="protein sequence ID" value="ENSMUSP00000064315.5"/>
    <property type="gene ID" value="ENSMUSG00000020389.20"/>
</dbReference>
<dbReference type="Ensembl" id="ENSMUST00000063321.13">
    <molecule id="Q8BLF2-7"/>
    <property type="protein sequence ID" value="ENSMUSP00000065128.7"/>
    <property type="gene ID" value="ENSMUSG00000020389.20"/>
</dbReference>
<dbReference type="Ensembl" id="ENSMUST00000109076.2">
    <molecule id="Q8BLF2-4"/>
    <property type="protein sequence ID" value="ENSMUSP00000104704.2"/>
    <property type="gene ID" value="ENSMUSG00000020389.20"/>
</dbReference>
<dbReference type="Ensembl" id="ENSMUST00000109077.9">
    <molecule id="Q8BLF2-4"/>
    <property type="protein sequence ID" value="ENSMUSP00000104705.3"/>
    <property type="gene ID" value="ENSMUSG00000020389.20"/>
</dbReference>
<dbReference type="Ensembl" id="ENSMUST00000109078.8">
    <molecule id="Q8BLF2-6"/>
    <property type="protein sequence ID" value="ENSMUSP00000104706.2"/>
    <property type="gene ID" value="ENSMUSG00000020389.20"/>
</dbReference>
<dbReference type="Ensembl" id="ENSMUST00000109079.9">
    <molecule id="Q8BLF2-7"/>
    <property type="protein sequence ID" value="ENSMUSP00000104707.3"/>
    <property type="gene ID" value="ENSMUSG00000020389.20"/>
</dbReference>
<dbReference type="Ensembl" id="ENSMUST00000109081.9">
    <molecule id="Q8BLF2-2"/>
    <property type="protein sequence ID" value="ENSMUSP00000104709.3"/>
    <property type="gene ID" value="ENSMUSG00000020389.20"/>
</dbReference>
<dbReference type="Ensembl" id="ENSMUST00000121591.8">
    <molecule id="Q8BLF2-2"/>
    <property type="protein sequence ID" value="ENSMUSP00000112477.2"/>
    <property type="gene ID" value="ENSMUSG00000020389.20"/>
</dbReference>
<dbReference type="GeneID" id="213084"/>
<dbReference type="KEGG" id="mmu:213084"/>
<dbReference type="UCSC" id="uc007iuv.2">
    <molecule id="Q8BLF2-1"/>
    <property type="organism name" value="mouse"/>
</dbReference>
<dbReference type="UCSC" id="uc007iux.2">
    <molecule id="Q8BLF2-4"/>
    <property type="organism name" value="mouse"/>
</dbReference>
<dbReference type="UCSC" id="uc007iuz.2">
    <molecule id="Q8BLF2-2"/>
    <property type="organism name" value="mouse"/>
</dbReference>
<dbReference type="UCSC" id="uc011xul.1">
    <molecule id="Q8BLF2-7"/>
    <property type="organism name" value="mouse"/>
</dbReference>
<dbReference type="AGR" id="MGI:2388268"/>
<dbReference type="CTD" id="51265"/>
<dbReference type="MGI" id="MGI:2388268">
    <property type="gene designation" value="Cdkl3"/>
</dbReference>
<dbReference type="VEuPathDB" id="HostDB:ENSMUSG00000020389"/>
<dbReference type="eggNOG" id="KOG0593">
    <property type="taxonomic scope" value="Eukaryota"/>
</dbReference>
<dbReference type="GeneTree" id="ENSGT00940000161317"/>
<dbReference type="HOGENOM" id="CLU_000288_136_1_1"/>
<dbReference type="InParanoid" id="Q8BLF2"/>
<dbReference type="OMA" id="GMEVKQV"/>
<dbReference type="OrthoDB" id="548217at2759"/>
<dbReference type="TreeFam" id="TF101031"/>
<dbReference type="BioGRID-ORCS" id="213084">
    <property type="hits" value="3 hits in 81 CRISPR screens"/>
</dbReference>
<dbReference type="ChiTaRS" id="Cdkl3">
    <property type="organism name" value="mouse"/>
</dbReference>
<dbReference type="PRO" id="PR:Q8BLF2"/>
<dbReference type="Proteomes" id="UP000000589">
    <property type="component" value="Chromosome 11"/>
</dbReference>
<dbReference type="RNAct" id="Q8BLF2">
    <property type="molecule type" value="protein"/>
</dbReference>
<dbReference type="Bgee" id="ENSMUSG00000020389">
    <property type="expression patterns" value="Expressed in spermatid and 116 other cell types or tissues"/>
</dbReference>
<dbReference type="ExpressionAtlas" id="Q8BLF2">
    <property type="expression patterns" value="baseline and differential"/>
</dbReference>
<dbReference type="GO" id="GO:0005737">
    <property type="term" value="C:cytoplasm"/>
    <property type="evidence" value="ECO:0000266"/>
    <property type="project" value="MGI"/>
</dbReference>
<dbReference type="GO" id="GO:0005634">
    <property type="term" value="C:nucleus"/>
    <property type="evidence" value="ECO:0000266"/>
    <property type="project" value="MGI"/>
</dbReference>
<dbReference type="GO" id="GO:0005524">
    <property type="term" value="F:ATP binding"/>
    <property type="evidence" value="ECO:0007669"/>
    <property type="project" value="UniProtKB-KW"/>
</dbReference>
<dbReference type="GO" id="GO:0004693">
    <property type="term" value="F:cyclin-dependent protein serine/threonine kinase activity"/>
    <property type="evidence" value="ECO:0007669"/>
    <property type="project" value="UniProtKB-EC"/>
</dbReference>
<dbReference type="GO" id="GO:0106310">
    <property type="term" value="F:protein serine kinase activity"/>
    <property type="evidence" value="ECO:0007669"/>
    <property type="project" value="RHEA"/>
</dbReference>
<dbReference type="GO" id="GO:0097484">
    <property type="term" value="P:dendrite extension"/>
    <property type="evidence" value="ECO:0000315"/>
    <property type="project" value="MGI"/>
</dbReference>
<dbReference type="GO" id="GO:0030517">
    <property type="term" value="P:negative regulation of axon extension"/>
    <property type="evidence" value="ECO:0000315"/>
    <property type="project" value="MGI"/>
</dbReference>
<dbReference type="GO" id="GO:0050775">
    <property type="term" value="P:positive regulation of dendrite morphogenesis"/>
    <property type="evidence" value="ECO:0000315"/>
    <property type="project" value="MGI"/>
</dbReference>
<dbReference type="FunFam" id="3.30.200.20:FF:000049">
    <property type="entry name" value="cyclin-dependent kinase-like 1 isoform X1"/>
    <property type="match status" value="1"/>
</dbReference>
<dbReference type="FunFam" id="1.10.510.10:FF:000370">
    <property type="entry name" value="cyclin-dependent kinase-like 3 isoform X2"/>
    <property type="match status" value="1"/>
</dbReference>
<dbReference type="Gene3D" id="3.30.200.20">
    <property type="entry name" value="Phosphorylase Kinase, domain 1"/>
    <property type="match status" value="1"/>
</dbReference>
<dbReference type="Gene3D" id="1.10.510.10">
    <property type="entry name" value="Transferase(Phosphotransferase) domain 1"/>
    <property type="match status" value="1"/>
</dbReference>
<dbReference type="InterPro" id="IPR050108">
    <property type="entry name" value="CDK"/>
</dbReference>
<dbReference type="InterPro" id="IPR011009">
    <property type="entry name" value="Kinase-like_dom_sf"/>
</dbReference>
<dbReference type="InterPro" id="IPR000719">
    <property type="entry name" value="Prot_kinase_dom"/>
</dbReference>
<dbReference type="InterPro" id="IPR017441">
    <property type="entry name" value="Protein_kinase_ATP_BS"/>
</dbReference>
<dbReference type="InterPro" id="IPR008271">
    <property type="entry name" value="Ser/Thr_kinase_AS"/>
</dbReference>
<dbReference type="PANTHER" id="PTHR24056">
    <property type="entry name" value="CELL DIVISION PROTEIN KINASE"/>
    <property type="match status" value="1"/>
</dbReference>
<dbReference type="PANTHER" id="PTHR24056:SF177">
    <property type="entry name" value="CYCLIN-DEPENDENT KINASE-LIKE 3"/>
    <property type="match status" value="1"/>
</dbReference>
<dbReference type="Pfam" id="PF00069">
    <property type="entry name" value="Pkinase"/>
    <property type="match status" value="1"/>
</dbReference>
<dbReference type="SMART" id="SM00220">
    <property type="entry name" value="S_TKc"/>
    <property type="match status" value="1"/>
</dbReference>
<dbReference type="SUPFAM" id="SSF56112">
    <property type="entry name" value="Protein kinase-like (PK-like)"/>
    <property type="match status" value="1"/>
</dbReference>
<dbReference type="PROSITE" id="PS00107">
    <property type="entry name" value="PROTEIN_KINASE_ATP"/>
    <property type="match status" value="1"/>
</dbReference>
<dbReference type="PROSITE" id="PS50011">
    <property type="entry name" value="PROTEIN_KINASE_DOM"/>
    <property type="match status" value="1"/>
</dbReference>
<dbReference type="PROSITE" id="PS00108">
    <property type="entry name" value="PROTEIN_KINASE_ST"/>
    <property type="match status" value="1"/>
</dbReference>
<organism>
    <name type="scientific">Mus musculus</name>
    <name type="common">Mouse</name>
    <dbReference type="NCBI Taxonomy" id="10090"/>
    <lineage>
        <taxon>Eukaryota</taxon>
        <taxon>Metazoa</taxon>
        <taxon>Chordata</taxon>
        <taxon>Craniata</taxon>
        <taxon>Vertebrata</taxon>
        <taxon>Euteleostomi</taxon>
        <taxon>Mammalia</taxon>
        <taxon>Eutheria</taxon>
        <taxon>Euarchontoglires</taxon>
        <taxon>Glires</taxon>
        <taxon>Rodentia</taxon>
        <taxon>Myomorpha</taxon>
        <taxon>Muroidea</taxon>
        <taxon>Muridae</taxon>
        <taxon>Murinae</taxon>
        <taxon>Mus</taxon>
        <taxon>Mus</taxon>
    </lineage>
</organism>
<sequence>MEMYETLGKVGEGSYGTVMKCKHKDTGRIVAIKIFYEKPEKSVNKIATREIKFLKQFRHENLVNLIEVFRQKKKIHLVFEFIDHTVLDELQHYCHGLESKRLRKYLFQILRAIEYLHNNNIIHRDIKPENILVSQSGITKLCDFGFARTLAAPGDVYTDYVATRWYRAPELVLKDTSYGKPVDIWALGCMIIEMATGHPFLPSSSDLDLLHKIVLKVGNLTPHLHNIFSKSPIFAGVVLPQVQHPKTARKKYPKLNGLLADIVHACLQIDPAERTSSTDLLRHDYFTRDGFIEKFIPELRAKLLQEAKVNSFIKPKENFKENEPVRDEKKSVFTNTLLYGNPSLYGKEVDRDKRAKELKVRVIKAKGGKGDVPDQKKPEYEGDHRQQGTADDTQPSSLDKKPSVLELTNPLNPSENSDGVKEDPHAGGCMIMPPINLTSSNLLAANLSSNLSHPNSRLTERTKKRRTSSQTIGQTLSNSRQEDTGPTQVQTEKGAFNERTGQNDQISSGNKRKLNFPKCDRKEFHFPELPFTVQAKEMKGMEVKQIKVLKRESKKTDSSKIPTLLSMDPNQEKQEGGDGDCEGKNLKRNRFFFSR</sequence>
<accession>Q8BLF2</accession>
<accession>A2ACR7</accession>
<accession>A2ACR8</accession>
<accession>A2ACR9</accession>
<accession>A2ACS0</accession>
<accession>A2ACS1</accession>
<accession>Q5M6W2</accession>
<accession>Q8BKR2</accession>
<accession>Q8BL49</accession>
<accession>Q8BLN9</accession>
<accession>Q8BVE0</accession>
<accession>Q8K134</accession>
<evidence type="ECO:0000250" key="1"/>
<evidence type="ECO:0000250" key="2">
    <source>
        <dbReference type="UniProtKB" id="Q9JM01"/>
    </source>
</evidence>
<evidence type="ECO:0000255" key="3">
    <source>
        <dbReference type="PROSITE-ProRule" id="PRU00159"/>
    </source>
</evidence>
<evidence type="ECO:0000255" key="4">
    <source>
        <dbReference type="PROSITE-ProRule" id="PRU10027"/>
    </source>
</evidence>
<evidence type="ECO:0000256" key="5">
    <source>
        <dbReference type="SAM" id="MobiDB-lite"/>
    </source>
</evidence>
<evidence type="ECO:0000303" key="6">
    <source>
    </source>
</evidence>
<evidence type="ECO:0000303" key="7">
    <source>
    </source>
</evidence>
<evidence type="ECO:0000305" key="8"/>
<evidence type="ECO:0000312" key="9">
    <source>
        <dbReference type="MGI" id="MGI:2388268"/>
    </source>
</evidence>
<name>CDKL3_MOUSE</name>
<keyword id="KW-0025">Alternative splicing</keyword>
<keyword id="KW-0067">ATP-binding</keyword>
<keyword id="KW-0963">Cytoplasm</keyword>
<keyword id="KW-0418">Kinase</keyword>
<keyword id="KW-0547">Nucleotide-binding</keyword>
<keyword id="KW-0597">Phosphoprotein</keyword>
<keyword id="KW-1185">Reference proteome</keyword>
<keyword id="KW-0723">Serine/threonine-protein kinase</keyword>
<keyword id="KW-0808">Transferase</keyword>
<proteinExistence type="evidence at transcript level"/>
<comment type="catalytic activity">
    <reaction>
        <text>L-seryl-[protein] + ATP = O-phospho-L-seryl-[protein] + ADP + H(+)</text>
        <dbReference type="Rhea" id="RHEA:17989"/>
        <dbReference type="Rhea" id="RHEA-COMP:9863"/>
        <dbReference type="Rhea" id="RHEA-COMP:11604"/>
        <dbReference type="ChEBI" id="CHEBI:15378"/>
        <dbReference type="ChEBI" id="CHEBI:29999"/>
        <dbReference type="ChEBI" id="CHEBI:30616"/>
        <dbReference type="ChEBI" id="CHEBI:83421"/>
        <dbReference type="ChEBI" id="CHEBI:456216"/>
        <dbReference type="EC" id="2.7.11.22"/>
    </reaction>
</comment>
<comment type="catalytic activity">
    <reaction>
        <text>L-threonyl-[protein] + ATP = O-phospho-L-threonyl-[protein] + ADP + H(+)</text>
        <dbReference type="Rhea" id="RHEA:46608"/>
        <dbReference type="Rhea" id="RHEA-COMP:11060"/>
        <dbReference type="Rhea" id="RHEA-COMP:11605"/>
        <dbReference type="ChEBI" id="CHEBI:15378"/>
        <dbReference type="ChEBI" id="CHEBI:30013"/>
        <dbReference type="ChEBI" id="CHEBI:30616"/>
        <dbReference type="ChEBI" id="CHEBI:61977"/>
        <dbReference type="ChEBI" id="CHEBI:456216"/>
        <dbReference type="EC" id="2.7.11.22"/>
    </reaction>
</comment>
<comment type="subcellular location">
    <subcellularLocation>
        <location evidence="1">Cytoplasm</location>
    </subcellularLocation>
</comment>
<comment type="alternative products">
    <event type="alternative splicing"/>
    <isoform>
        <id>Q8BLF2-1</id>
        <name>1</name>
        <sequence type="displayed"/>
    </isoform>
    <isoform>
        <id>Q8BLF2-2</id>
        <name>2</name>
        <sequence type="described" ref="VSP_016154 VSP_016157"/>
    </isoform>
    <isoform>
        <id>Q8BLF2-7</id>
        <name>3</name>
        <sequence type="described" ref="VSP_016155 VSP_016156"/>
    </isoform>
    <isoform>
        <id>Q8BLF2-4</id>
        <name>4</name>
        <sequence type="described" ref="VSP_016150 VSP_016151"/>
    </isoform>
    <isoform>
        <id>Q8BLF2-5</id>
        <name>5</name>
        <sequence type="described" ref="VSP_016149 VSP_016155 VSP_016156"/>
    </isoform>
    <isoform>
        <id>Q8BLF2-6</id>
        <name>6</name>
        <sequence type="described" ref="VSP_016152"/>
    </isoform>
    <isoform>
        <id>Q8BLF2-8</id>
        <name>7</name>
        <sequence type="described" ref="VSP_030154"/>
    </isoform>
</comment>
<comment type="domain">
    <text>The [NKR]KIAxRE motif seems to be a cyclin-binding region.</text>
</comment>
<comment type="similarity">
    <text evidence="8">Belongs to the protein kinase superfamily. CMGC Ser/Thr protein kinase family. CDC2/CDKX subfamily.</text>
</comment>
<gene>
    <name evidence="9" type="primary">Cdkl3</name>
</gene>